<gene>
    <name evidence="1" type="primary">hemH</name>
    <name type="ordered locus">jhp_1005</name>
</gene>
<feature type="chain" id="PRO_0000175150" description="Ferrochelatase">
    <location>
        <begin position="1"/>
        <end position="335"/>
    </location>
</feature>
<feature type="binding site" evidence="1">
    <location>
        <position position="207"/>
    </location>
    <ligand>
        <name>Fe cation</name>
        <dbReference type="ChEBI" id="CHEBI:24875"/>
    </ligand>
</feature>
<feature type="binding site" evidence="1">
    <location>
        <position position="288"/>
    </location>
    <ligand>
        <name>Fe cation</name>
        <dbReference type="ChEBI" id="CHEBI:24875"/>
    </ligand>
</feature>
<accession>Q9ZKD4</accession>
<keyword id="KW-0963">Cytoplasm</keyword>
<keyword id="KW-0350">Heme biosynthesis</keyword>
<keyword id="KW-0408">Iron</keyword>
<keyword id="KW-0456">Lyase</keyword>
<keyword id="KW-0479">Metal-binding</keyword>
<keyword id="KW-0627">Porphyrin biosynthesis</keyword>
<evidence type="ECO:0000255" key="1">
    <source>
        <dbReference type="HAMAP-Rule" id="MF_00323"/>
    </source>
</evidence>
<evidence type="ECO:0000305" key="2"/>
<proteinExistence type="inferred from homology"/>
<sequence>MNLINEKLNNLENSATKSPKEAVVLLNMGGPNSLYEVGVFLKNMFDDPFILTIKNNFMRKMVGKMIVNSRIEKSKKIYEKLGGKSPLTPITFALTERLNELDPSRFYTYAMRYTPPYASMVLQDLALKEIESLVFFSMYPQYSSTTTLSSFNDAFNALKSLETFRPKVRVIERFYADKKLNEIILNTILSALNNCKSQDFVLIFSVHGLPKSIVDAGDTYQQECEHHVSLLKELMQQKNIPFKEVLLSYQSKLGPMKWLEPSTEELIEKHRKSNIIIYPLAFTIDNSETLYELDMQYRLMAERLAVKEYLVCPCLNDSIEFAKFIIELVKNLKSE</sequence>
<comment type="function">
    <text evidence="1">Catalyzes the ferrous insertion into protoporphyrin IX.</text>
</comment>
<comment type="catalytic activity">
    <reaction evidence="1">
        <text>heme b + 2 H(+) = protoporphyrin IX + Fe(2+)</text>
        <dbReference type="Rhea" id="RHEA:22584"/>
        <dbReference type="ChEBI" id="CHEBI:15378"/>
        <dbReference type="ChEBI" id="CHEBI:29033"/>
        <dbReference type="ChEBI" id="CHEBI:57306"/>
        <dbReference type="ChEBI" id="CHEBI:60344"/>
        <dbReference type="EC" id="4.98.1.1"/>
    </reaction>
</comment>
<comment type="pathway">
    <text evidence="1">Porphyrin-containing compound metabolism; protoheme biosynthesis; protoheme from protoporphyrin-IX: step 1/1.</text>
</comment>
<comment type="subcellular location">
    <subcellularLocation>
        <location evidence="1">Cytoplasm</location>
    </subcellularLocation>
</comment>
<comment type="similarity">
    <text evidence="1 2">Belongs to the ferrochelatase family.</text>
</comment>
<dbReference type="EC" id="4.98.1.1" evidence="1"/>
<dbReference type="EMBL" id="AE001439">
    <property type="protein sequence ID" value="AAD06589.1"/>
    <property type="molecule type" value="Genomic_DNA"/>
</dbReference>
<dbReference type="PIR" id="A71860">
    <property type="entry name" value="A71860"/>
</dbReference>
<dbReference type="RefSeq" id="WP_001049113.1">
    <property type="nucleotide sequence ID" value="NC_000921.1"/>
</dbReference>
<dbReference type="SMR" id="Q9ZKD4"/>
<dbReference type="KEGG" id="hpj:jhp_1005"/>
<dbReference type="PATRIC" id="fig|85963.30.peg.1585"/>
<dbReference type="eggNOG" id="COG0276">
    <property type="taxonomic scope" value="Bacteria"/>
</dbReference>
<dbReference type="UniPathway" id="UPA00252">
    <property type="reaction ID" value="UER00325"/>
</dbReference>
<dbReference type="Proteomes" id="UP000000804">
    <property type="component" value="Chromosome"/>
</dbReference>
<dbReference type="GO" id="GO:0005737">
    <property type="term" value="C:cytoplasm"/>
    <property type="evidence" value="ECO:0007669"/>
    <property type="project" value="UniProtKB-SubCell"/>
</dbReference>
<dbReference type="GO" id="GO:0004325">
    <property type="term" value="F:ferrochelatase activity"/>
    <property type="evidence" value="ECO:0007669"/>
    <property type="project" value="UniProtKB-UniRule"/>
</dbReference>
<dbReference type="GO" id="GO:0046872">
    <property type="term" value="F:metal ion binding"/>
    <property type="evidence" value="ECO:0007669"/>
    <property type="project" value="UniProtKB-KW"/>
</dbReference>
<dbReference type="GO" id="GO:0006783">
    <property type="term" value="P:heme biosynthetic process"/>
    <property type="evidence" value="ECO:0007669"/>
    <property type="project" value="UniProtKB-UniRule"/>
</dbReference>
<dbReference type="CDD" id="cd00419">
    <property type="entry name" value="Ferrochelatase_C"/>
    <property type="match status" value="1"/>
</dbReference>
<dbReference type="CDD" id="cd03411">
    <property type="entry name" value="Ferrochelatase_N"/>
    <property type="match status" value="1"/>
</dbReference>
<dbReference type="Gene3D" id="3.40.50.1400">
    <property type="match status" value="2"/>
</dbReference>
<dbReference type="HAMAP" id="MF_00323">
    <property type="entry name" value="Ferrochelatase"/>
    <property type="match status" value="1"/>
</dbReference>
<dbReference type="InterPro" id="IPR001015">
    <property type="entry name" value="Ferrochelatase"/>
</dbReference>
<dbReference type="InterPro" id="IPR019772">
    <property type="entry name" value="Ferrochelatase_AS"/>
</dbReference>
<dbReference type="InterPro" id="IPR033644">
    <property type="entry name" value="Ferrochelatase_C"/>
</dbReference>
<dbReference type="InterPro" id="IPR033659">
    <property type="entry name" value="Ferrochelatase_N"/>
</dbReference>
<dbReference type="NCBIfam" id="TIGR00109">
    <property type="entry name" value="hemH"/>
    <property type="match status" value="1"/>
</dbReference>
<dbReference type="PANTHER" id="PTHR11108">
    <property type="entry name" value="FERROCHELATASE"/>
    <property type="match status" value="1"/>
</dbReference>
<dbReference type="PANTHER" id="PTHR11108:SF1">
    <property type="entry name" value="FERROCHELATASE, MITOCHONDRIAL"/>
    <property type="match status" value="1"/>
</dbReference>
<dbReference type="Pfam" id="PF00762">
    <property type="entry name" value="Ferrochelatase"/>
    <property type="match status" value="1"/>
</dbReference>
<dbReference type="SUPFAM" id="SSF53800">
    <property type="entry name" value="Chelatase"/>
    <property type="match status" value="1"/>
</dbReference>
<dbReference type="PROSITE" id="PS00534">
    <property type="entry name" value="FERROCHELATASE"/>
    <property type="match status" value="1"/>
</dbReference>
<reference key="1">
    <citation type="journal article" date="1999" name="Nature">
        <title>Genomic sequence comparison of two unrelated isolates of the human gastric pathogen Helicobacter pylori.</title>
        <authorList>
            <person name="Alm R.A."/>
            <person name="Ling L.-S.L."/>
            <person name="Moir D.T."/>
            <person name="King B.L."/>
            <person name="Brown E.D."/>
            <person name="Doig P.C."/>
            <person name="Smith D.R."/>
            <person name="Noonan B."/>
            <person name="Guild B.C."/>
            <person name="deJonge B.L."/>
            <person name="Carmel G."/>
            <person name="Tummino P.J."/>
            <person name="Caruso A."/>
            <person name="Uria-Nickelsen M."/>
            <person name="Mills D.M."/>
            <person name="Ives C."/>
            <person name="Gibson R."/>
            <person name="Merberg D."/>
            <person name="Mills S.D."/>
            <person name="Jiang Q."/>
            <person name="Taylor D.E."/>
            <person name="Vovis G.F."/>
            <person name="Trust T.J."/>
        </authorList>
    </citation>
    <scope>NUCLEOTIDE SEQUENCE [LARGE SCALE GENOMIC DNA]</scope>
    <source>
        <strain>J99 / ATCC 700824</strain>
    </source>
</reference>
<organism>
    <name type="scientific">Helicobacter pylori (strain J99 / ATCC 700824)</name>
    <name type="common">Campylobacter pylori J99</name>
    <dbReference type="NCBI Taxonomy" id="85963"/>
    <lineage>
        <taxon>Bacteria</taxon>
        <taxon>Pseudomonadati</taxon>
        <taxon>Campylobacterota</taxon>
        <taxon>Epsilonproteobacteria</taxon>
        <taxon>Campylobacterales</taxon>
        <taxon>Helicobacteraceae</taxon>
        <taxon>Helicobacter</taxon>
    </lineage>
</organism>
<protein>
    <recommendedName>
        <fullName evidence="1">Ferrochelatase</fullName>
        <ecNumber evidence="1">4.98.1.1</ecNumber>
    </recommendedName>
    <alternativeName>
        <fullName evidence="1">Heme synthase</fullName>
    </alternativeName>
    <alternativeName>
        <fullName evidence="1">Protoheme ferro-lyase</fullName>
    </alternativeName>
</protein>
<name>HEMH_HELPJ</name>